<organism>
    <name type="scientific">Aromatoleum aromaticum (strain DSM 19018 / LMG 30748 / EbN1)</name>
    <name type="common">Azoarcus sp. (strain EbN1)</name>
    <dbReference type="NCBI Taxonomy" id="76114"/>
    <lineage>
        <taxon>Bacteria</taxon>
        <taxon>Pseudomonadati</taxon>
        <taxon>Pseudomonadota</taxon>
        <taxon>Betaproteobacteria</taxon>
        <taxon>Rhodocyclales</taxon>
        <taxon>Rhodocyclaceae</taxon>
        <taxon>Aromatoleum</taxon>
    </lineage>
</organism>
<proteinExistence type="inferred from homology"/>
<evidence type="ECO:0000255" key="1">
    <source>
        <dbReference type="HAMAP-Rule" id="MF_00605"/>
    </source>
</evidence>
<comment type="function">
    <text evidence="1">Specifically methylates guanosine-37 in various tRNAs.</text>
</comment>
<comment type="catalytic activity">
    <reaction evidence="1">
        <text>guanosine(37) in tRNA + S-adenosyl-L-methionine = N(1)-methylguanosine(37) in tRNA + S-adenosyl-L-homocysteine + H(+)</text>
        <dbReference type="Rhea" id="RHEA:36899"/>
        <dbReference type="Rhea" id="RHEA-COMP:10145"/>
        <dbReference type="Rhea" id="RHEA-COMP:10147"/>
        <dbReference type="ChEBI" id="CHEBI:15378"/>
        <dbReference type="ChEBI" id="CHEBI:57856"/>
        <dbReference type="ChEBI" id="CHEBI:59789"/>
        <dbReference type="ChEBI" id="CHEBI:73542"/>
        <dbReference type="ChEBI" id="CHEBI:74269"/>
        <dbReference type="EC" id="2.1.1.228"/>
    </reaction>
</comment>
<comment type="subunit">
    <text evidence="1">Homodimer.</text>
</comment>
<comment type="subcellular location">
    <subcellularLocation>
        <location evidence="1">Cytoplasm</location>
    </subcellularLocation>
</comment>
<comment type="similarity">
    <text evidence="1">Belongs to the RNA methyltransferase TrmD family.</text>
</comment>
<protein>
    <recommendedName>
        <fullName evidence="1">tRNA (guanine-N(1)-)-methyltransferase</fullName>
        <ecNumber evidence="1">2.1.1.228</ecNumber>
    </recommendedName>
    <alternativeName>
        <fullName evidence="1">M1G-methyltransferase</fullName>
    </alternativeName>
    <alternativeName>
        <fullName evidence="1">tRNA [GM37] methyltransferase</fullName>
    </alternativeName>
</protein>
<keyword id="KW-0963">Cytoplasm</keyword>
<keyword id="KW-0489">Methyltransferase</keyword>
<keyword id="KW-1185">Reference proteome</keyword>
<keyword id="KW-0949">S-adenosyl-L-methionine</keyword>
<keyword id="KW-0808">Transferase</keyword>
<keyword id="KW-0819">tRNA processing</keyword>
<sequence>MNTPAAARRFDVITLFPEMFAALTASGITRRALERGLYEIAFHSPRDFVSDPHRTVDDRPYGGGPGMVMLAEPLEKAIGRAKTAQEQALGAAGRVIYLSPQGRPLDHAKVVEMTALPALTLLCGRYEGVDQRLIDRCVDEELSLGDFVLSGGELPAMVLLDAIVRQLPGALNDADSAQEDSFVDGLLDCPHYTRPEIYAGERVPQVLLSGNHAAIRRWRLKQALGTTWRRRPDLLQGRTLSKEELSLLGEFRHEQEGVEGDIA</sequence>
<accession>Q5NXM5</accession>
<feature type="chain" id="PRO_0000060318" description="tRNA (guanine-N(1)-)-methyltransferase">
    <location>
        <begin position="1"/>
        <end position="263"/>
    </location>
</feature>
<feature type="binding site" evidence="1">
    <location>
        <position position="124"/>
    </location>
    <ligand>
        <name>S-adenosyl-L-methionine</name>
        <dbReference type="ChEBI" id="CHEBI:59789"/>
    </ligand>
</feature>
<feature type="binding site" evidence="1">
    <location>
        <begin position="144"/>
        <end position="149"/>
    </location>
    <ligand>
        <name>S-adenosyl-L-methionine</name>
        <dbReference type="ChEBI" id="CHEBI:59789"/>
    </ligand>
</feature>
<reference key="1">
    <citation type="journal article" date="2005" name="Arch. Microbiol.">
        <title>The genome sequence of an anaerobic aromatic-degrading denitrifying bacterium, strain EbN1.</title>
        <authorList>
            <person name="Rabus R."/>
            <person name="Kube M."/>
            <person name="Heider J."/>
            <person name="Beck A."/>
            <person name="Heitmann K."/>
            <person name="Widdel F."/>
            <person name="Reinhardt R."/>
        </authorList>
    </citation>
    <scope>NUCLEOTIDE SEQUENCE [LARGE SCALE GENOMIC DNA]</scope>
    <source>
        <strain>DSM 19018 / LMG 30748 / EbN1</strain>
    </source>
</reference>
<gene>
    <name evidence="1" type="primary">trmD</name>
    <name type="ordered locus">AZOSEA40640</name>
    <name type="ORF">ebA7168</name>
</gene>
<dbReference type="EC" id="2.1.1.228" evidence="1"/>
<dbReference type="EMBL" id="CR555306">
    <property type="protein sequence ID" value="CAI10189.1"/>
    <property type="molecule type" value="Genomic_DNA"/>
</dbReference>
<dbReference type="RefSeq" id="WP_011239834.1">
    <property type="nucleotide sequence ID" value="NC_006513.1"/>
</dbReference>
<dbReference type="SMR" id="Q5NXM5"/>
<dbReference type="STRING" id="76114.ebA7168"/>
<dbReference type="KEGG" id="eba:ebA7168"/>
<dbReference type="eggNOG" id="COG0336">
    <property type="taxonomic scope" value="Bacteria"/>
</dbReference>
<dbReference type="HOGENOM" id="CLU_047363_0_2_4"/>
<dbReference type="OrthoDB" id="9807416at2"/>
<dbReference type="Proteomes" id="UP000006552">
    <property type="component" value="Chromosome"/>
</dbReference>
<dbReference type="GO" id="GO:0005829">
    <property type="term" value="C:cytosol"/>
    <property type="evidence" value="ECO:0007669"/>
    <property type="project" value="TreeGrafter"/>
</dbReference>
<dbReference type="GO" id="GO:0052906">
    <property type="term" value="F:tRNA (guanine(37)-N1)-methyltransferase activity"/>
    <property type="evidence" value="ECO:0007669"/>
    <property type="project" value="UniProtKB-UniRule"/>
</dbReference>
<dbReference type="GO" id="GO:0002939">
    <property type="term" value="P:tRNA N1-guanine methylation"/>
    <property type="evidence" value="ECO:0007669"/>
    <property type="project" value="TreeGrafter"/>
</dbReference>
<dbReference type="CDD" id="cd18080">
    <property type="entry name" value="TrmD-like"/>
    <property type="match status" value="1"/>
</dbReference>
<dbReference type="FunFam" id="1.10.1270.20:FF:000001">
    <property type="entry name" value="tRNA (guanine-N(1)-)-methyltransferase"/>
    <property type="match status" value="1"/>
</dbReference>
<dbReference type="FunFam" id="3.40.1280.10:FF:000001">
    <property type="entry name" value="tRNA (guanine-N(1)-)-methyltransferase"/>
    <property type="match status" value="1"/>
</dbReference>
<dbReference type="Gene3D" id="3.40.1280.10">
    <property type="match status" value="1"/>
</dbReference>
<dbReference type="Gene3D" id="1.10.1270.20">
    <property type="entry name" value="tRNA(m1g37)methyltransferase, domain 2"/>
    <property type="match status" value="1"/>
</dbReference>
<dbReference type="HAMAP" id="MF_00605">
    <property type="entry name" value="TrmD"/>
    <property type="match status" value="1"/>
</dbReference>
<dbReference type="InterPro" id="IPR029028">
    <property type="entry name" value="Alpha/beta_knot_MTases"/>
</dbReference>
<dbReference type="InterPro" id="IPR023148">
    <property type="entry name" value="tRNA_m1G_MeTrfase_C_sf"/>
</dbReference>
<dbReference type="InterPro" id="IPR002649">
    <property type="entry name" value="tRNA_m1G_MeTrfase_TrmD"/>
</dbReference>
<dbReference type="InterPro" id="IPR029026">
    <property type="entry name" value="tRNA_m1G_MTases_N"/>
</dbReference>
<dbReference type="InterPro" id="IPR016009">
    <property type="entry name" value="tRNA_MeTrfase_TRMD/TRM10"/>
</dbReference>
<dbReference type="NCBIfam" id="NF000648">
    <property type="entry name" value="PRK00026.1"/>
    <property type="match status" value="1"/>
</dbReference>
<dbReference type="NCBIfam" id="TIGR00088">
    <property type="entry name" value="trmD"/>
    <property type="match status" value="1"/>
</dbReference>
<dbReference type="PANTHER" id="PTHR46417">
    <property type="entry name" value="TRNA (GUANINE-N(1)-)-METHYLTRANSFERASE"/>
    <property type="match status" value="1"/>
</dbReference>
<dbReference type="PANTHER" id="PTHR46417:SF1">
    <property type="entry name" value="TRNA (GUANINE-N(1)-)-METHYLTRANSFERASE"/>
    <property type="match status" value="1"/>
</dbReference>
<dbReference type="Pfam" id="PF01746">
    <property type="entry name" value="tRNA_m1G_MT"/>
    <property type="match status" value="1"/>
</dbReference>
<dbReference type="PIRSF" id="PIRSF000386">
    <property type="entry name" value="tRNA_mtase"/>
    <property type="match status" value="1"/>
</dbReference>
<dbReference type="SUPFAM" id="SSF75217">
    <property type="entry name" value="alpha/beta knot"/>
    <property type="match status" value="1"/>
</dbReference>
<name>TRMD_AROAE</name>